<keyword id="KW-1185">Reference proteome</keyword>
<keyword id="KW-0687">Ribonucleoprotein</keyword>
<keyword id="KW-0689">Ribosomal protein</keyword>
<dbReference type="EMBL" id="CP000783">
    <property type="protein sequence ID" value="ABU78396.1"/>
    <property type="molecule type" value="Genomic_DNA"/>
</dbReference>
<dbReference type="RefSeq" id="WP_004386139.1">
    <property type="nucleotide sequence ID" value="NC_009778.1"/>
</dbReference>
<dbReference type="SMR" id="A7MGT2"/>
<dbReference type="GeneID" id="92807606"/>
<dbReference type="KEGG" id="esa:ESA_03173"/>
<dbReference type="HOGENOM" id="CLU_040318_1_0_6"/>
<dbReference type="Proteomes" id="UP000000260">
    <property type="component" value="Chromosome"/>
</dbReference>
<dbReference type="GO" id="GO:0022627">
    <property type="term" value="C:cytosolic small ribosomal subunit"/>
    <property type="evidence" value="ECO:0007669"/>
    <property type="project" value="TreeGrafter"/>
</dbReference>
<dbReference type="GO" id="GO:0003735">
    <property type="term" value="F:structural constituent of ribosome"/>
    <property type="evidence" value="ECO:0007669"/>
    <property type="project" value="InterPro"/>
</dbReference>
<dbReference type="GO" id="GO:0006412">
    <property type="term" value="P:translation"/>
    <property type="evidence" value="ECO:0007669"/>
    <property type="project" value="UniProtKB-UniRule"/>
</dbReference>
<dbReference type="CDD" id="cd01425">
    <property type="entry name" value="RPS2"/>
    <property type="match status" value="1"/>
</dbReference>
<dbReference type="FunFam" id="1.10.287.610:FF:000001">
    <property type="entry name" value="30S ribosomal protein S2"/>
    <property type="match status" value="1"/>
</dbReference>
<dbReference type="Gene3D" id="3.40.50.10490">
    <property type="entry name" value="Glucose-6-phosphate isomerase like protein, domain 1"/>
    <property type="match status" value="1"/>
</dbReference>
<dbReference type="Gene3D" id="1.10.287.610">
    <property type="entry name" value="Helix hairpin bin"/>
    <property type="match status" value="1"/>
</dbReference>
<dbReference type="HAMAP" id="MF_00291_B">
    <property type="entry name" value="Ribosomal_uS2_B"/>
    <property type="match status" value="1"/>
</dbReference>
<dbReference type="InterPro" id="IPR001865">
    <property type="entry name" value="Ribosomal_uS2"/>
</dbReference>
<dbReference type="InterPro" id="IPR005706">
    <property type="entry name" value="Ribosomal_uS2_bac/mit/plastid"/>
</dbReference>
<dbReference type="InterPro" id="IPR018130">
    <property type="entry name" value="Ribosomal_uS2_CS"/>
</dbReference>
<dbReference type="InterPro" id="IPR023591">
    <property type="entry name" value="Ribosomal_uS2_flav_dom_sf"/>
</dbReference>
<dbReference type="NCBIfam" id="TIGR01011">
    <property type="entry name" value="rpsB_bact"/>
    <property type="match status" value="1"/>
</dbReference>
<dbReference type="PANTHER" id="PTHR12534">
    <property type="entry name" value="30S RIBOSOMAL PROTEIN S2 PROKARYOTIC AND ORGANELLAR"/>
    <property type="match status" value="1"/>
</dbReference>
<dbReference type="PANTHER" id="PTHR12534:SF0">
    <property type="entry name" value="SMALL RIBOSOMAL SUBUNIT PROTEIN US2M"/>
    <property type="match status" value="1"/>
</dbReference>
<dbReference type="Pfam" id="PF00318">
    <property type="entry name" value="Ribosomal_S2"/>
    <property type="match status" value="1"/>
</dbReference>
<dbReference type="PRINTS" id="PR00395">
    <property type="entry name" value="RIBOSOMALS2"/>
</dbReference>
<dbReference type="SUPFAM" id="SSF52313">
    <property type="entry name" value="Ribosomal protein S2"/>
    <property type="match status" value="1"/>
</dbReference>
<dbReference type="PROSITE" id="PS00962">
    <property type="entry name" value="RIBOSOMAL_S2_1"/>
    <property type="match status" value="1"/>
</dbReference>
<dbReference type="PROSITE" id="PS00963">
    <property type="entry name" value="RIBOSOMAL_S2_2"/>
    <property type="match status" value="1"/>
</dbReference>
<comment type="similarity">
    <text evidence="1">Belongs to the universal ribosomal protein uS2 family.</text>
</comment>
<protein>
    <recommendedName>
        <fullName evidence="1">Small ribosomal subunit protein uS2</fullName>
    </recommendedName>
    <alternativeName>
        <fullName evidence="2">30S ribosomal protein S2</fullName>
    </alternativeName>
</protein>
<evidence type="ECO:0000255" key="1">
    <source>
        <dbReference type="HAMAP-Rule" id="MF_00291"/>
    </source>
</evidence>
<evidence type="ECO:0000305" key="2"/>
<organism>
    <name type="scientific">Cronobacter sakazakii (strain ATCC BAA-894)</name>
    <name type="common">Enterobacter sakazakii</name>
    <dbReference type="NCBI Taxonomy" id="290339"/>
    <lineage>
        <taxon>Bacteria</taxon>
        <taxon>Pseudomonadati</taxon>
        <taxon>Pseudomonadota</taxon>
        <taxon>Gammaproteobacteria</taxon>
        <taxon>Enterobacterales</taxon>
        <taxon>Enterobacteriaceae</taxon>
        <taxon>Cronobacter</taxon>
    </lineage>
</organism>
<reference key="1">
    <citation type="journal article" date="2010" name="PLoS ONE">
        <title>Genome sequence of Cronobacter sakazakii BAA-894 and comparative genomic hybridization analysis with other Cronobacter species.</title>
        <authorList>
            <person name="Kucerova E."/>
            <person name="Clifton S.W."/>
            <person name="Xia X.Q."/>
            <person name="Long F."/>
            <person name="Porwollik S."/>
            <person name="Fulton L."/>
            <person name="Fronick C."/>
            <person name="Minx P."/>
            <person name="Kyung K."/>
            <person name="Warren W."/>
            <person name="Fulton R."/>
            <person name="Feng D."/>
            <person name="Wollam A."/>
            <person name="Shah N."/>
            <person name="Bhonagiri V."/>
            <person name="Nash W.E."/>
            <person name="Hallsworth-Pepin K."/>
            <person name="Wilson R.K."/>
            <person name="McClelland M."/>
            <person name="Forsythe S.J."/>
        </authorList>
    </citation>
    <scope>NUCLEOTIDE SEQUENCE [LARGE SCALE GENOMIC DNA]</scope>
    <source>
        <strain>ATCC BAA-894</strain>
    </source>
</reference>
<name>RS2_CROS8</name>
<accession>A7MGT2</accession>
<sequence length="241" mass="26775">MATVSMRDMLKAGVHFGHQTRYWNPKMKPFIFGARNKVHIINLEKTVPMFNEALAELSKISSRKGKILFVGTKRAASEAVKEAANSCDQFFVNHRWLGGMLTNWKTVRQSIKRLKDLETQSQDGTFDKLTKKEALMRTRELEKLENSLGGIKDMGGLPDALFVIDADHEHIAIKEANNLGIPVFAIVDTNSDPDGVDFVIPGNDDAIRAVSLYLNAVAATVREGRSQDLAAQAEESFVEAE</sequence>
<feature type="chain" id="PRO_1000003959" description="Small ribosomal subunit protein uS2">
    <location>
        <begin position="1"/>
        <end position="241"/>
    </location>
</feature>
<gene>
    <name evidence="1" type="primary">rpsB</name>
    <name type="ordered locus">ESA_03173</name>
</gene>
<proteinExistence type="inferred from homology"/>